<reference key="1">
    <citation type="journal article" date="2006" name="BMC Genomics">
        <title>Complete genome sequence of Shigella flexneri 5b and comparison with Shigella flexneri 2a.</title>
        <authorList>
            <person name="Nie H."/>
            <person name="Yang F."/>
            <person name="Zhang X."/>
            <person name="Yang J."/>
            <person name="Chen L."/>
            <person name="Wang J."/>
            <person name="Xiong Z."/>
            <person name="Peng J."/>
            <person name="Sun L."/>
            <person name="Dong J."/>
            <person name="Xue Y."/>
            <person name="Xu X."/>
            <person name="Chen S."/>
            <person name="Yao Z."/>
            <person name="Shen Y."/>
            <person name="Jin Q."/>
        </authorList>
    </citation>
    <scope>NUCLEOTIDE SEQUENCE [LARGE SCALE GENOMIC DNA]</scope>
    <source>
        <strain>8401</strain>
    </source>
</reference>
<evidence type="ECO:0000255" key="1">
    <source>
        <dbReference type="HAMAP-Rule" id="MF_00171"/>
    </source>
</evidence>
<sequence>MSDQQQLPVYKIALGIEYDGSKYYGWQRQNEVRSVQEKLEKALSQVANEPITVFCAGRTDAGVHGTGQVVHFETTAQRKDAAWTLGVNANLPGDIAVRWVKAVPDDFHARFSATARRYRYIIYNHRLRPAVLSKGVTHFYEPLDAERMHRAAQCLLGENDFTSFRAVQCQSRTPWRNVMHINVTRHGPYVVVDIKANAFVHHMVRNIVGSLMEVGAHNQPESWIAELLAAKDRTLAAATAKAEGLYLVAVDYPDRYDLPKPPMGPLFLAD</sequence>
<feature type="chain" id="PRO_1000017177" description="tRNA pseudouridine synthase A">
    <location>
        <begin position="1"/>
        <end position="270"/>
    </location>
</feature>
<feature type="region of interest" description="RNA binding" evidence="1">
    <location>
        <begin position="107"/>
        <end position="111"/>
    </location>
</feature>
<feature type="region of interest" description="Interaction with tRNA" evidence="1">
    <location>
        <begin position="168"/>
        <end position="172"/>
    </location>
</feature>
<feature type="active site" description="Nucleophile" evidence="1">
    <location>
        <position position="60"/>
    </location>
</feature>
<feature type="binding site" evidence="1">
    <location>
        <position position="118"/>
    </location>
    <ligand>
        <name>substrate</name>
    </ligand>
</feature>
<feature type="site" description="Interaction with tRNA; Important for base-flipping" evidence="1">
    <location>
        <position position="58"/>
    </location>
</feature>
<feature type="site" description="Interaction with tRNA" evidence="1">
    <location>
        <position position="78"/>
    </location>
</feature>
<feature type="site" description="Interaction with tRNA" evidence="1">
    <location>
        <position position="110"/>
    </location>
</feature>
<feature type="site" description="Interaction with tRNA" evidence="1">
    <location>
        <position position="126"/>
    </location>
</feature>
<feature type="site" description="Interaction with tRNA" evidence="1">
    <location>
        <position position="139"/>
    </location>
</feature>
<gene>
    <name evidence="1" type="primary">truA</name>
    <name type="ordered locus">SFV_2387</name>
</gene>
<dbReference type="EC" id="5.4.99.12" evidence="1"/>
<dbReference type="EMBL" id="CP000266">
    <property type="protein sequence ID" value="ABF04498.1"/>
    <property type="molecule type" value="Genomic_DNA"/>
</dbReference>
<dbReference type="RefSeq" id="WP_001283581.1">
    <property type="nucleotide sequence ID" value="NC_008258.1"/>
</dbReference>
<dbReference type="SMR" id="Q0T2G7"/>
<dbReference type="GeneID" id="75202599"/>
<dbReference type="KEGG" id="sfv:SFV_2387"/>
<dbReference type="HOGENOM" id="CLU_014673_0_2_6"/>
<dbReference type="Proteomes" id="UP000000659">
    <property type="component" value="Chromosome"/>
</dbReference>
<dbReference type="GO" id="GO:0003723">
    <property type="term" value="F:RNA binding"/>
    <property type="evidence" value="ECO:0007669"/>
    <property type="project" value="InterPro"/>
</dbReference>
<dbReference type="GO" id="GO:0160147">
    <property type="term" value="F:tRNA pseudouridine(38-40) synthase activity"/>
    <property type="evidence" value="ECO:0007669"/>
    <property type="project" value="UniProtKB-EC"/>
</dbReference>
<dbReference type="GO" id="GO:0031119">
    <property type="term" value="P:tRNA pseudouridine synthesis"/>
    <property type="evidence" value="ECO:0007669"/>
    <property type="project" value="UniProtKB-UniRule"/>
</dbReference>
<dbReference type="CDD" id="cd02570">
    <property type="entry name" value="PseudoU_synth_EcTruA"/>
    <property type="match status" value="1"/>
</dbReference>
<dbReference type="FunFam" id="3.30.70.580:FF:000001">
    <property type="entry name" value="tRNA pseudouridine synthase A"/>
    <property type="match status" value="1"/>
</dbReference>
<dbReference type="FunFam" id="3.30.70.660:FF:000001">
    <property type="entry name" value="tRNA pseudouridine synthase A"/>
    <property type="match status" value="1"/>
</dbReference>
<dbReference type="Gene3D" id="3.30.70.660">
    <property type="entry name" value="Pseudouridine synthase I, catalytic domain, C-terminal subdomain"/>
    <property type="match status" value="1"/>
</dbReference>
<dbReference type="Gene3D" id="3.30.70.580">
    <property type="entry name" value="Pseudouridine synthase I, catalytic domain, N-terminal subdomain"/>
    <property type="match status" value="1"/>
</dbReference>
<dbReference type="HAMAP" id="MF_00171">
    <property type="entry name" value="TruA"/>
    <property type="match status" value="1"/>
</dbReference>
<dbReference type="InterPro" id="IPR020103">
    <property type="entry name" value="PsdUridine_synth_cat_dom_sf"/>
</dbReference>
<dbReference type="InterPro" id="IPR001406">
    <property type="entry name" value="PsdUridine_synth_TruA"/>
</dbReference>
<dbReference type="InterPro" id="IPR020097">
    <property type="entry name" value="PsdUridine_synth_TruA_a/b_dom"/>
</dbReference>
<dbReference type="InterPro" id="IPR020095">
    <property type="entry name" value="PsdUridine_synth_TruA_C"/>
</dbReference>
<dbReference type="InterPro" id="IPR020094">
    <property type="entry name" value="TruA/RsuA/RluB/E/F_N"/>
</dbReference>
<dbReference type="NCBIfam" id="TIGR00071">
    <property type="entry name" value="hisT_truA"/>
    <property type="match status" value="1"/>
</dbReference>
<dbReference type="PANTHER" id="PTHR11142">
    <property type="entry name" value="PSEUDOURIDYLATE SYNTHASE"/>
    <property type="match status" value="1"/>
</dbReference>
<dbReference type="PANTHER" id="PTHR11142:SF0">
    <property type="entry name" value="TRNA PSEUDOURIDINE SYNTHASE-LIKE 1"/>
    <property type="match status" value="1"/>
</dbReference>
<dbReference type="Pfam" id="PF01416">
    <property type="entry name" value="PseudoU_synth_1"/>
    <property type="match status" value="2"/>
</dbReference>
<dbReference type="PIRSF" id="PIRSF001430">
    <property type="entry name" value="tRNA_psdUrid_synth"/>
    <property type="match status" value="1"/>
</dbReference>
<dbReference type="SUPFAM" id="SSF55120">
    <property type="entry name" value="Pseudouridine synthase"/>
    <property type="match status" value="1"/>
</dbReference>
<name>TRUA_SHIF8</name>
<comment type="function">
    <text evidence="1">Formation of pseudouridine at positions 38, 39 and 40 in the anticodon stem and loop of transfer RNAs.</text>
</comment>
<comment type="catalytic activity">
    <reaction evidence="1">
        <text>uridine(38/39/40) in tRNA = pseudouridine(38/39/40) in tRNA</text>
        <dbReference type="Rhea" id="RHEA:22376"/>
        <dbReference type="Rhea" id="RHEA-COMP:10085"/>
        <dbReference type="Rhea" id="RHEA-COMP:10087"/>
        <dbReference type="ChEBI" id="CHEBI:65314"/>
        <dbReference type="ChEBI" id="CHEBI:65315"/>
        <dbReference type="EC" id="5.4.99.12"/>
    </reaction>
</comment>
<comment type="subunit">
    <text evidence="1">Homodimer.</text>
</comment>
<comment type="similarity">
    <text evidence="1">Belongs to the tRNA pseudouridine synthase TruA family.</text>
</comment>
<organism>
    <name type="scientific">Shigella flexneri serotype 5b (strain 8401)</name>
    <dbReference type="NCBI Taxonomy" id="373384"/>
    <lineage>
        <taxon>Bacteria</taxon>
        <taxon>Pseudomonadati</taxon>
        <taxon>Pseudomonadota</taxon>
        <taxon>Gammaproteobacteria</taxon>
        <taxon>Enterobacterales</taxon>
        <taxon>Enterobacteriaceae</taxon>
        <taxon>Shigella</taxon>
    </lineage>
</organism>
<accession>Q0T2G7</accession>
<protein>
    <recommendedName>
        <fullName evidence="1">tRNA pseudouridine synthase A</fullName>
        <ecNumber evidence="1">5.4.99.12</ecNumber>
    </recommendedName>
    <alternativeName>
        <fullName evidence="1">tRNA pseudouridine(38-40) synthase</fullName>
    </alternativeName>
    <alternativeName>
        <fullName evidence="1">tRNA pseudouridylate synthase I</fullName>
    </alternativeName>
    <alternativeName>
        <fullName evidence="1">tRNA-uridine isomerase I</fullName>
    </alternativeName>
</protein>
<proteinExistence type="inferred from homology"/>
<keyword id="KW-0413">Isomerase</keyword>
<keyword id="KW-0819">tRNA processing</keyword>